<evidence type="ECO:0000250" key="1"/>
<evidence type="ECO:0000305" key="2"/>
<keyword id="KW-0903">Direct protein sequencing</keyword>
<keyword id="KW-0256">Endoplasmic reticulum</keyword>
<keyword id="KW-0434">Leukotriene biosynthesis</keyword>
<keyword id="KW-0472">Membrane</keyword>
<keyword id="KW-0539">Nucleus</keyword>
<keyword id="KW-1185">Reference proteome</keyword>
<keyword id="KW-0812">Transmembrane</keyword>
<keyword id="KW-1133">Transmembrane helix</keyword>
<gene>
    <name type="primary">Alox5ap</name>
    <name type="synonym">Flap</name>
</gene>
<dbReference type="EMBL" id="X52196">
    <property type="protein sequence ID" value="CAA36442.1"/>
    <property type="molecule type" value="mRNA"/>
</dbReference>
<dbReference type="EMBL" id="BC086593">
    <property type="protein sequence ID" value="AAH86593.1"/>
    <property type="molecule type" value="mRNA"/>
</dbReference>
<dbReference type="PIR" id="S08206">
    <property type="entry name" value="S08206"/>
</dbReference>
<dbReference type="RefSeq" id="NP_058956.1">
    <property type="nucleotide sequence ID" value="NM_017260.2"/>
</dbReference>
<dbReference type="SMR" id="P20291"/>
<dbReference type="DIP" id="DIP-48660N"/>
<dbReference type="FunCoup" id="P20291">
    <property type="interactions" value="345"/>
</dbReference>
<dbReference type="IntAct" id="P20291">
    <property type="interactions" value="1"/>
</dbReference>
<dbReference type="STRING" id="10116.ENSRNOP00000001207"/>
<dbReference type="BindingDB" id="P20291"/>
<dbReference type="ChEMBL" id="CHEMBL1921661"/>
<dbReference type="PhosphoSitePlus" id="P20291"/>
<dbReference type="PaxDb" id="10116-ENSRNOP00000001207"/>
<dbReference type="Ensembl" id="ENSRNOT00000001207.7">
    <property type="protein sequence ID" value="ENSRNOP00000001207.3"/>
    <property type="gene ID" value="ENSRNOG00000000907.7"/>
</dbReference>
<dbReference type="GeneID" id="29624"/>
<dbReference type="KEGG" id="rno:29624"/>
<dbReference type="UCSC" id="RGD:2097">
    <property type="organism name" value="rat"/>
</dbReference>
<dbReference type="AGR" id="RGD:2097"/>
<dbReference type="CTD" id="241"/>
<dbReference type="RGD" id="2097">
    <property type="gene designation" value="Alox5ap"/>
</dbReference>
<dbReference type="eggNOG" id="ENOG502RZJB">
    <property type="taxonomic scope" value="Eukaryota"/>
</dbReference>
<dbReference type="GeneTree" id="ENSGT00940000158706"/>
<dbReference type="HOGENOM" id="CLU_110291_0_0_1"/>
<dbReference type="InParanoid" id="P20291"/>
<dbReference type="OMA" id="NAPWHTQ"/>
<dbReference type="OrthoDB" id="8659873at2759"/>
<dbReference type="PhylomeDB" id="P20291"/>
<dbReference type="TreeFam" id="TF105328"/>
<dbReference type="Reactome" id="R-RNO-2142688">
    <property type="pathway name" value="Synthesis of 5-eicosatetraenoic acids"/>
</dbReference>
<dbReference type="Reactome" id="R-RNO-2142691">
    <property type="pathway name" value="Synthesis of Leukotrienes (LT) and Eoxins (EX)"/>
</dbReference>
<dbReference type="Reactome" id="R-RNO-2142700">
    <property type="pathway name" value="Biosynthesis of Lipoxins (LX)"/>
</dbReference>
<dbReference type="PRO" id="PR:P20291"/>
<dbReference type="Proteomes" id="UP000002494">
    <property type="component" value="Chromosome 12"/>
</dbReference>
<dbReference type="Bgee" id="ENSRNOG00000000907">
    <property type="expression patterns" value="Expressed in lung and 19 other cell types or tissues"/>
</dbReference>
<dbReference type="GO" id="GO:0005783">
    <property type="term" value="C:endoplasmic reticulum"/>
    <property type="evidence" value="ECO:0000266"/>
    <property type="project" value="RGD"/>
</dbReference>
<dbReference type="GO" id="GO:0005789">
    <property type="term" value="C:endoplasmic reticulum membrane"/>
    <property type="evidence" value="ECO:0007669"/>
    <property type="project" value="UniProtKB-SubCell"/>
</dbReference>
<dbReference type="GO" id="GO:0005635">
    <property type="term" value="C:nuclear envelope"/>
    <property type="evidence" value="ECO:0000314"/>
    <property type="project" value="RGD"/>
</dbReference>
<dbReference type="GO" id="GO:0031965">
    <property type="term" value="C:nuclear membrane"/>
    <property type="evidence" value="ECO:0000250"/>
    <property type="project" value="UniProtKB"/>
</dbReference>
<dbReference type="GO" id="GO:0005634">
    <property type="term" value="C:nucleus"/>
    <property type="evidence" value="ECO:0000266"/>
    <property type="project" value="RGD"/>
</dbReference>
<dbReference type="GO" id="GO:0050544">
    <property type="term" value="F:arachidonate binding"/>
    <property type="evidence" value="ECO:0000250"/>
    <property type="project" value="UniProtKB"/>
</dbReference>
<dbReference type="GO" id="GO:0008047">
    <property type="term" value="F:enzyme activator activity"/>
    <property type="evidence" value="ECO:0007669"/>
    <property type="project" value="InterPro"/>
</dbReference>
<dbReference type="GO" id="GO:0019899">
    <property type="term" value="F:enzyme binding"/>
    <property type="evidence" value="ECO:0000353"/>
    <property type="project" value="RGD"/>
</dbReference>
<dbReference type="GO" id="GO:0004602">
    <property type="term" value="F:glutathione peroxidase activity"/>
    <property type="evidence" value="ECO:0000318"/>
    <property type="project" value="GO_Central"/>
</dbReference>
<dbReference type="GO" id="GO:0004364">
    <property type="term" value="F:glutathione transferase activity"/>
    <property type="evidence" value="ECO:0000318"/>
    <property type="project" value="GO_Central"/>
</dbReference>
<dbReference type="GO" id="GO:0042802">
    <property type="term" value="F:identical protein binding"/>
    <property type="evidence" value="ECO:0000353"/>
    <property type="project" value="RGD"/>
</dbReference>
<dbReference type="GO" id="GO:0004464">
    <property type="term" value="F:leukotriene-C4 synthase activity"/>
    <property type="evidence" value="ECO:0000318"/>
    <property type="project" value="GO_Central"/>
</dbReference>
<dbReference type="GO" id="GO:0044877">
    <property type="term" value="F:protein-containing complex binding"/>
    <property type="evidence" value="ECO:0000353"/>
    <property type="project" value="RGD"/>
</dbReference>
<dbReference type="GO" id="GO:0071277">
    <property type="term" value="P:cellular response to calcium ion"/>
    <property type="evidence" value="ECO:0000266"/>
    <property type="project" value="RGD"/>
</dbReference>
<dbReference type="GO" id="GO:0019370">
    <property type="term" value="P:leukotriene biosynthetic process"/>
    <property type="evidence" value="ECO:0000314"/>
    <property type="project" value="RGD"/>
</dbReference>
<dbReference type="GO" id="GO:0002540">
    <property type="term" value="P:leukotriene production involved in inflammatory response"/>
    <property type="evidence" value="ECO:0000266"/>
    <property type="project" value="RGD"/>
</dbReference>
<dbReference type="GO" id="GO:0019372">
    <property type="term" value="P:lipoxygenase pathway"/>
    <property type="evidence" value="ECO:0000314"/>
    <property type="project" value="RGD"/>
</dbReference>
<dbReference type="GO" id="GO:0002675">
    <property type="term" value="P:positive regulation of acute inflammatory response"/>
    <property type="evidence" value="ECO:0000315"/>
    <property type="project" value="RGD"/>
</dbReference>
<dbReference type="GO" id="GO:0070207">
    <property type="term" value="P:protein homotrimerization"/>
    <property type="evidence" value="ECO:0000266"/>
    <property type="project" value="RGD"/>
</dbReference>
<dbReference type="FunFam" id="1.20.120.550:FF:000003">
    <property type="entry name" value="Leukotriene C4 synthase"/>
    <property type="match status" value="1"/>
</dbReference>
<dbReference type="Gene3D" id="1.20.120.550">
    <property type="entry name" value="Membrane associated eicosanoid/glutathione metabolism-like domain"/>
    <property type="match status" value="1"/>
</dbReference>
<dbReference type="InterPro" id="IPR001446">
    <property type="entry name" value="5_LipOase_AP"/>
</dbReference>
<dbReference type="InterPro" id="IPR018295">
    <property type="entry name" value="FLAP/GST2/LTC4S_CS"/>
</dbReference>
<dbReference type="InterPro" id="IPR050997">
    <property type="entry name" value="MAPEG"/>
</dbReference>
<dbReference type="InterPro" id="IPR023352">
    <property type="entry name" value="MAPEG-like_dom_sf"/>
</dbReference>
<dbReference type="InterPro" id="IPR001129">
    <property type="entry name" value="Membr-assoc_MAPEG"/>
</dbReference>
<dbReference type="PANTHER" id="PTHR10250:SF2">
    <property type="entry name" value="ARACHIDONATE 5-LIPOXYGENASE-ACTIVATING PROTEIN"/>
    <property type="match status" value="1"/>
</dbReference>
<dbReference type="PANTHER" id="PTHR10250">
    <property type="entry name" value="MICROSOMAL GLUTATHIONE S-TRANSFERASE"/>
    <property type="match status" value="1"/>
</dbReference>
<dbReference type="Pfam" id="PF01124">
    <property type="entry name" value="MAPEG"/>
    <property type="match status" value="1"/>
</dbReference>
<dbReference type="PRINTS" id="PR00488">
    <property type="entry name" value="5LPOXGNASEAP"/>
</dbReference>
<dbReference type="SUPFAM" id="SSF161084">
    <property type="entry name" value="MAPEG domain-like"/>
    <property type="match status" value="1"/>
</dbReference>
<dbReference type="PROSITE" id="PS01297">
    <property type="entry name" value="FLAP_GST2_LTC4S"/>
    <property type="match status" value="1"/>
</dbReference>
<proteinExistence type="evidence at protein level"/>
<protein>
    <recommendedName>
        <fullName>Arachidonate 5-lipoxygenase-activating protein</fullName>
    </recommendedName>
    <alternativeName>
        <fullName>FLAP</fullName>
    </alternativeName>
    <alternativeName>
        <fullName>MK-886-binding protein</fullName>
    </alternativeName>
</protein>
<organism>
    <name type="scientific">Rattus norvegicus</name>
    <name type="common">Rat</name>
    <dbReference type="NCBI Taxonomy" id="10116"/>
    <lineage>
        <taxon>Eukaryota</taxon>
        <taxon>Metazoa</taxon>
        <taxon>Chordata</taxon>
        <taxon>Craniata</taxon>
        <taxon>Vertebrata</taxon>
        <taxon>Euteleostomi</taxon>
        <taxon>Mammalia</taxon>
        <taxon>Eutheria</taxon>
        <taxon>Euarchontoglires</taxon>
        <taxon>Glires</taxon>
        <taxon>Rodentia</taxon>
        <taxon>Myomorpha</taxon>
        <taxon>Muroidea</taxon>
        <taxon>Muridae</taxon>
        <taxon>Murinae</taxon>
        <taxon>Rattus</taxon>
    </lineage>
</organism>
<sequence>MDQEAVGNVVLLAIVTLISVVQNAFFAHKVELESKAQSGRSFQRTGTLAFERVYTANQNCVDAYPTFLVVLWTAGLLCSQVPAAFAGLMYLFVRQKYFVGYLGERTQSTPGYIFGKRIILFLFLMSLAGILNHYLIFFFGSDFENYIRTITTTISPLLLIP</sequence>
<name>AL5AP_RAT</name>
<comment type="function">
    <text evidence="1">Required for leukotriene biosynthesis by ALOX5 (5-lipoxygenase). Anchors ALOX5 to the membrane. Binds arachidonic acid, and could play an essential role in the transfer of arachidonic acid to ALOX5. Binds to MK-886, a compound that blocks the biosynthesis of leukotrienes (By similarity).</text>
</comment>
<comment type="subunit">
    <text evidence="1">Homotrimer. Interacts with LTC4S and ALOX5 (By similarity).</text>
</comment>
<comment type="subcellular location">
    <subcellularLocation>
        <location evidence="1">Nucleus membrane</location>
        <topology evidence="1">Multi-pass membrane protein</topology>
    </subcellularLocation>
    <subcellularLocation>
        <location evidence="1">Endoplasmic reticulum membrane</location>
        <topology evidence="1">Multi-pass membrane protein</topology>
    </subcellularLocation>
</comment>
<comment type="domain">
    <text evidence="1">The C-terminal part after residue 140 is mostly disordered.</text>
</comment>
<comment type="similarity">
    <text evidence="2">Belongs to the MAPEG family.</text>
</comment>
<accession>P20291</accession>
<accession>Q5RJL3</accession>
<reference key="1">
    <citation type="journal article" date="1990" name="Nature">
        <title>Requirement of a 5-lipoxygenase-activating protein for leukotriene synthesis.</title>
        <authorList>
            <person name="Dixon R.A.F."/>
            <person name="Diehl R.E."/>
            <person name="Opas E."/>
            <person name="Rands E."/>
            <person name="Vickers P.J."/>
            <person name="Evans J.F."/>
            <person name="Gillard J.W."/>
            <person name="Miller D.K."/>
        </authorList>
    </citation>
    <scope>NUCLEOTIDE SEQUENCE [MRNA]</scope>
</reference>
<reference key="2">
    <citation type="journal article" date="2004" name="Genome Res.">
        <title>The status, quality, and expansion of the NIH full-length cDNA project: the Mammalian Gene Collection (MGC).</title>
        <authorList>
            <consortium name="The MGC Project Team"/>
        </authorList>
    </citation>
    <scope>NUCLEOTIDE SEQUENCE [LARGE SCALE MRNA]</scope>
    <source>
        <tissue>Ovary</tissue>
    </source>
</reference>
<reference key="3">
    <citation type="journal article" date="1990" name="Nature">
        <title>Identification and isolation of a membrane protein necessary for leukotriene production.</title>
        <authorList>
            <person name="Miller D.K."/>
            <person name="Gillard J.W."/>
            <person name="Vickers P.J."/>
            <person name="Sadowski S."/>
            <person name="Leveille C."/>
            <person name="Mancini J.A."/>
            <person name="Charleson P."/>
            <person name="Dixon R.A.F."/>
            <person name="Ford-Hutchinson A.W."/>
            <person name="Fortin R."/>
            <person name="Gauthier J.Y."/>
            <person name="Rodkey J."/>
            <person name="Rosen R."/>
            <person name="Rouzer C."/>
            <person name="Sigal I.S."/>
            <person name="Strader C.D."/>
            <person name="Evans J.F."/>
        </authorList>
    </citation>
    <scope>PROTEIN SEQUENCE OF 1-39; 90-121 AND 126-146</scope>
</reference>
<feature type="chain" id="PRO_0000217756" description="Arachidonate 5-lipoxygenase-activating protein">
    <location>
        <begin position="1"/>
        <end position="161"/>
    </location>
</feature>
<feature type="topological domain" description="Lumenal" evidence="1">
    <location>
        <begin position="1"/>
        <end position="8"/>
    </location>
</feature>
<feature type="transmembrane region" description="Helical" evidence="1">
    <location>
        <begin position="9"/>
        <end position="30"/>
    </location>
</feature>
<feature type="topological domain" description="Cytoplasmic" evidence="1">
    <location>
        <begin position="31"/>
        <end position="52"/>
    </location>
</feature>
<feature type="transmembrane region" description="Helical" evidence="1">
    <location>
        <begin position="53"/>
        <end position="77"/>
    </location>
</feature>
<feature type="topological domain" description="Lumenal" evidence="1">
    <location>
        <begin position="78"/>
        <end position="80"/>
    </location>
</feature>
<feature type="transmembrane region" description="Helical" evidence="1">
    <location>
        <begin position="81"/>
        <end position="102"/>
    </location>
</feature>
<feature type="topological domain" description="Cytoplasmic" evidence="1">
    <location>
        <begin position="103"/>
        <end position="107"/>
    </location>
</feature>
<feature type="intramembrane region" evidence="1">
    <location>
        <begin position="108"/>
        <end position="115"/>
    </location>
</feature>
<feature type="transmembrane region" description="Helical" evidence="1">
    <location>
        <begin position="116"/>
        <end position="128"/>
    </location>
</feature>
<feature type="topological domain" description="Lumenal" evidence="1">
    <location>
        <begin position="129"/>
        <end position="161"/>
    </location>
</feature>
<feature type="sequence conflict" description="In Ref. 3; AA sequence." evidence="2" ref="3">
    <original>L</original>
    <variation>I</variation>
    <location>
        <position position="32"/>
    </location>
</feature>
<feature type="sequence conflict" description="In Ref. 3; AA sequence." evidence="2" ref="3">
    <original>L</original>
    <variation>I</variation>
    <location>
        <position position="127"/>
    </location>
</feature>